<reference key="1">
    <citation type="journal article" date="2001" name="FEBS Lett.">
        <title>Human monkeypox and smallpox viruses: genomic comparison.</title>
        <authorList>
            <person name="Shchelkunov S.N."/>
            <person name="Totmenin A.V."/>
            <person name="Babkin I.V."/>
            <person name="Safronov P.F."/>
            <person name="Ryazankina O.I."/>
            <person name="Petrov N.A."/>
            <person name="Gutorov V.V."/>
            <person name="Uvarova E.A."/>
            <person name="Mikheev M.V."/>
            <person name="Sisler J.R."/>
            <person name="Esposito J.J."/>
            <person name="Jahrling P.B."/>
            <person name="Moss B."/>
            <person name="Sandakhchiev L.S."/>
        </authorList>
    </citation>
    <scope>NUCLEOTIDE SEQUENCE [LARGE SCALE GENOMIC DNA]</scope>
    <source>
        <strain>Zaire-96-I-16</strain>
    </source>
</reference>
<accession>Q8V4T3</accession>
<gene>
    <name type="ORF">A46R</name>
</gene>
<dbReference type="EMBL" id="AF380138">
    <property type="protein sequence ID" value="AAL40614.1"/>
    <property type="molecule type" value="Genomic_DNA"/>
</dbReference>
<dbReference type="SMR" id="Q8V4T3"/>
<dbReference type="KEGG" id="vg:928932"/>
<dbReference type="Proteomes" id="UP000101269">
    <property type="component" value="Genome"/>
</dbReference>
<dbReference type="GO" id="GO:0030430">
    <property type="term" value="C:host cell cytoplasm"/>
    <property type="evidence" value="ECO:0007669"/>
    <property type="project" value="UniProtKB-SubCell"/>
</dbReference>
<dbReference type="GO" id="GO:0005507">
    <property type="term" value="F:copper ion binding"/>
    <property type="evidence" value="ECO:0007669"/>
    <property type="project" value="InterPro"/>
</dbReference>
<dbReference type="GO" id="GO:0006801">
    <property type="term" value="P:superoxide metabolic process"/>
    <property type="evidence" value="ECO:0007669"/>
    <property type="project" value="InterPro"/>
</dbReference>
<dbReference type="Gene3D" id="2.60.40.200">
    <property type="entry name" value="Superoxide dismutase, copper/zinc binding domain"/>
    <property type="match status" value="1"/>
</dbReference>
<dbReference type="InterPro" id="IPR036423">
    <property type="entry name" value="SOD-like_Cu/Zn_dom_sf"/>
</dbReference>
<dbReference type="InterPro" id="IPR024134">
    <property type="entry name" value="SOD_Cu/Zn_/chaperone"/>
</dbReference>
<dbReference type="PANTHER" id="PTHR10003">
    <property type="entry name" value="SUPEROXIDE DISMUTASE CU-ZN -RELATED"/>
    <property type="match status" value="1"/>
</dbReference>
<dbReference type="SUPFAM" id="SSF49329">
    <property type="entry name" value="Cu,Zn superoxide dismutase-like"/>
    <property type="match status" value="1"/>
</dbReference>
<protein>
    <recommendedName>
        <fullName>Cu-Zn superoxide dismutase-like protein</fullName>
    </recommendedName>
</protein>
<organismHost>
    <name type="scientific">Cynomys gunnisoni</name>
    <name type="common">Gunnison's prairie dog</name>
    <name type="synonym">Spermophilus gunnisoni</name>
    <dbReference type="NCBI Taxonomy" id="45479"/>
</organismHost>
<organismHost>
    <name type="scientific">Cynomys leucurus</name>
    <name type="common">White-tailed prairie dog</name>
    <dbReference type="NCBI Taxonomy" id="99825"/>
</organismHost>
<organismHost>
    <name type="scientific">Cynomys ludovicianus</name>
    <name type="common">Black-tailed prairie dog</name>
    <dbReference type="NCBI Taxonomy" id="45480"/>
</organismHost>
<organismHost>
    <name type="scientific">Cynomys mexicanus</name>
    <name type="common">Mexican prairie dog</name>
    <dbReference type="NCBI Taxonomy" id="99826"/>
</organismHost>
<organismHost>
    <name type="scientific">Cynomys parvidens</name>
    <name type="common">Utah prairie dog</name>
    <dbReference type="NCBI Taxonomy" id="99827"/>
</organismHost>
<organismHost>
    <name type="scientific">Gliridae</name>
    <name type="common">dormice</name>
    <dbReference type="NCBI Taxonomy" id="30650"/>
</organismHost>
<organismHost>
    <name type="scientific">Heliosciurus ruwenzorii</name>
    <name type="common">Ruwenzori sun squirrel</name>
    <dbReference type="NCBI Taxonomy" id="226685"/>
</organismHost>
<organismHost>
    <name type="scientific">Homo sapiens</name>
    <name type="common">Human</name>
    <dbReference type="NCBI Taxonomy" id="9606"/>
</organismHost>
<organismHost>
    <name type="scientific">Mus musculus</name>
    <name type="common">Mouse</name>
    <dbReference type="NCBI Taxonomy" id="10090"/>
</organismHost>
<comment type="function">
    <text evidence="1">Virion protein with no enzymatic activity.</text>
</comment>
<comment type="subcellular location">
    <subcellularLocation>
        <location evidence="1">Host cytoplasm</location>
    </subcellularLocation>
</comment>
<comment type="similarity">
    <text evidence="2">Belongs to the Cu-Zn superoxide dismutase family.</text>
</comment>
<feature type="chain" id="PRO_0000164176" description="Cu-Zn superoxide dismutase-like protein">
    <location>
        <begin position="1"/>
        <end position="125"/>
    </location>
</feature>
<feature type="disulfide bond" evidence="1">
    <location>
        <begin position="52"/>
        <end position="102"/>
    </location>
</feature>
<organism>
    <name type="scientific">Monkeypox virus (strain Zaire-96-I-16)</name>
    <name type="common">MPX</name>
    <dbReference type="NCBI Taxonomy" id="619591"/>
    <lineage>
        <taxon>Viruses</taxon>
        <taxon>Varidnaviria</taxon>
        <taxon>Bamfordvirae</taxon>
        <taxon>Nucleocytoviricota</taxon>
        <taxon>Pokkesviricetes</taxon>
        <taxon>Chitovirales</taxon>
        <taxon>Poxviridae</taxon>
        <taxon>Chordopoxvirinae</taxon>
        <taxon>Orthopoxvirus</taxon>
        <taxon>Monkeypox virus</taxon>
    </lineage>
</organism>
<name>SODL_MONPZ</name>
<sequence length="125" mass="13674">MAVCIIDHDNIRGVIYVEQVHGKDKVLGSVIGLKSGTYSLIIHRYGDISRGCDSIGSPEIFIGNIFVNRYGVAYVYLDTDVNISTIIGKALSISKNDQRLACGVIGISYINEKIIHFLTINENGV</sequence>
<keyword id="KW-1015">Disulfide bond</keyword>
<keyword id="KW-1035">Host cytoplasm</keyword>
<evidence type="ECO:0000250" key="1"/>
<evidence type="ECO:0000305" key="2"/>
<proteinExistence type="inferred from homology"/>